<comment type="function">
    <text evidence="2 3">A transcription factor that is probably redox-responsive. Probably plays a role in immunomodulation and reactivation after chronic infection. Its induction results in transcription of a number of genes including sigM, and the genes for 2 type VII secretion systems ESX-2 and ESX-4. Seems to negatively regulate its own expression. The apo-form has been shown to act as a protein disulfide reductase. The apo- but not holo-form probably binds DNA.</text>
</comment>
<comment type="cofactor">
    <cofactor evidence="1 4">
        <name>[4Fe-4S] cluster</name>
        <dbReference type="ChEBI" id="CHEBI:49883"/>
    </cofactor>
    <text evidence="1 4">Binds 1 [4Fe-4S] cluster per subunit. Contains 1 [2Fe-2S] cluster after reconstitution of overexpressed protein from E.coli. Following nitrosylation of the [4Fe-4S] cluster binds 1 [4Fe-8(NO)] cluster per subunit.</text>
</comment>
<comment type="subcellular location">
    <subcellularLocation>
        <location evidence="1">Cytoplasm</location>
    </subcellularLocation>
</comment>
<comment type="induction">
    <text evidence="3">Maximal expression during progressive infection is between 2-4 weeks, however low, stable expression during chronic infection.</text>
</comment>
<comment type="PTM">
    <text evidence="1">The Fe-S cluster can be nitrosylated by nitric oxide (NO).</text>
</comment>
<comment type="PTM">
    <text>Upon Fe-S cluster removal intramolecular disulfide bonds are formed.</text>
</comment>
<comment type="mass spectrometry">
    <text>Fully oxidized recombinant protein tagged at both termini.</text>
</comment>
<comment type="mass spectrometry">
    <text>Fully reduced recombinant protein tagged at both termini.</text>
</comment>
<comment type="disruption phenotype">
    <text evidence="3">Not essential in culture. Gives an attenuated infection during both progressive and chronic mouse infections. Mice infected with the disrupted strain induce a stronger host immune response than wild-type. Growth inhibited by S-nitrosoglutathione (GSNO), a source of glutathione and nitric oxide. Mutant cells are less metabolically active. When chronic infection was reactivated by corticosterone the mutant strain was not able to resume growth, suggesting that WhiB5 might be involved with bacillary proliferation during reactivation.</text>
</comment>
<comment type="similarity">
    <text evidence="4">Belongs to the WhiB family.</text>
</comment>
<sequence>MAHPCATDPELWFGYPDDDGSDGAAKARAYERSATQARIQCLRRCPLLQQRRCAQHAVEHRVEYGVWAGIKLPGGQYRKREQLAAAHDVLRRIAGGEINSRQLPDNAALLARNEGLEVTPVPGVVVHLPIAQVGPQPAA</sequence>
<feature type="chain" id="PRO_0000420384" description="Transcriptional regulator WhiB5">
    <location>
        <begin position="1"/>
        <end position="139"/>
    </location>
</feature>
<feature type="domain" description="4Fe-4S Wbl-type">
    <location>
        <begin position="4"/>
        <end position="77"/>
    </location>
</feature>
<feature type="binding site" evidence="1">
    <location>
        <position position="5"/>
    </location>
    <ligand>
        <name>[4Fe-4S] cluster</name>
        <dbReference type="ChEBI" id="CHEBI:49883"/>
    </ligand>
</feature>
<feature type="binding site" evidence="1">
    <location>
        <position position="41"/>
    </location>
    <ligand>
        <name>[4Fe-4S] cluster</name>
        <dbReference type="ChEBI" id="CHEBI:49883"/>
    </ligand>
</feature>
<feature type="binding site" evidence="1">
    <location>
        <position position="45"/>
    </location>
    <ligand>
        <name>[4Fe-4S] cluster</name>
        <dbReference type="ChEBI" id="CHEBI:49883"/>
    </ligand>
</feature>
<feature type="binding site" evidence="1">
    <location>
        <position position="53"/>
    </location>
    <ligand>
        <name>[4Fe-4S] cluster</name>
        <dbReference type="ChEBI" id="CHEBI:49883"/>
    </ligand>
</feature>
<proteinExistence type="evidence at protein level"/>
<name>WHB5A_MYCTU</name>
<organism>
    <name type="scientific">Mycobacterium tuberculosis (strain ATCC 25618 / H37Rv)</name>
    <dbReference type="NCBI Taxonomy" id="83332"/>
    <lineage>
        <taxon>Bacteria</taxon>
        <taxon>Bacillati</taxon>
        <taxon>Actinomycetota</taxon>
        <taxon>Actinomycetes</taxon>
        <taxon>Mycobacteriales</taxon>
        <taxon>Mycobacteriaceae</taxon>
        <taxon>Mycobacterium</taxon>
        <taxon>Mycobacterium tuberculosis complex</taxon>
    </lineage>
</organism>
<gene>
    <name type="primary">whiB5</name>
    <name type="ordered locus">Rv0022c</name>
</gene>
<evidence type="ECO:0000250" key="1"/>
<evidence type="ECO:0000269" key="2">
    <source>
    </source>
</evidence>
<evidence type="ECO:0000269" key="3">
    <source>
    </source>
</evidence>
<evidence type="ECO:0000305" key="4"/>
<reference key="1">
    <citation type="journal article" date="1998" name="Nature">
        <title>Deciphering the biology of Mycobacterium tuberculosis from the complete genome sequence.</title>
        <authorList>
            <person name="Cole S.T."/>
            <person name="Brosch R."/>
            <person name="Parkhill J."/>
            <person name="Garnier T."/>
            <person name="Churcher C.M."/>
            <person name="Harris D.E."/>
            <person name="Gordon S.V."/>
            <person name="Eiglmeier K."/>
            <person name="Gas S."/>
            <person name="Barry C.E. III"/>
            <person name="Tekaia F."/>
            <person name="Badcock K."/>
            <person name="Basham D."/>
            <person name="Brown D."/>
            <person name="Chillingworth T."/>
            <person name="Connor R."/>
            <person name="Davies R.M."/>
            <person name="Devlin K."/>
            <person name="Feltwell T."/>
            <person name="Gentles S."/>
            <person name="Hamlin N."/>
            <person name="Holroyd S."/>
            <person name="Hornsby T."/>
            <person name="Jagels K."/>
            <person name="Krogh A."/>
            <person name="McLean J."/>
            <person name="Moule S."/>
            <person name="Murphy L.D."/>
            <person name="Oliver S."/>
            <person name="Osborne J."/>
            <person name="Quail M.A."/>
            <person name="Rajandream M.A."/>
            <person name="Rogers J."/>
            <person name="Rutter S."/>
            <person name="Seeger K."/>
            <person name="Skelton S."/>
            <person name="Squares S."/>
            <person name="Squares R."/>
            <person name="Sulston J.E."/>
            <person name="Taylor K."/>
            <person name="Whitehead S."/>
            <person name="Barrell B.G."/>
        </authorList>
    </citation>
    <scope>NUCLEOTIDE SEQUENCE [LARGE SCALE GENOMIC DNA]</scope>
    <source>
        <strain>ATCC 25618 / H37Rv</strain>
    </source>
</reference>
<reference key="2">
    <citation type="journal article" date="2009" name="FEBS J.">
        <title>Studies on structural and functional divergence among seven WhiB proteins of Mycobacterium tuberculosis H37Rv.</title>
        <authorList>
            <person name="Alam M.S."/>
            <person name="Garg S.K."/>
            <person name="Agrawal P."/>
        </authorList>
    </citation>
    <scope>FUNCTION AS A PROTEIN DISULFIDE REDUCTASE</scope>
    <scope>COFACTOR</scope>
    <scope>MASS SPECTROMETRY</scope>
    <scope>DISULFIDE BOND</scope>
    <source>
        <strain>ATCC 25618 / H37Rv</strain>
    </source>
</reference>
<reference key="3">
    <citation type="journal article" date="2012" name="Infect. Immun.">
        <title>WhiB5, a transcriptional regulator that contributes to Mycobacterium tuberculosis virulence and reactivation.</title>
        <authorList>
            <person name="Casonato S."/>
            <person name="Cervantes Sanchez A."/>
            <person name="Haruki H."/>
            <person name="Rengifo Gonzalez M."/>
            <person name="Provvedi R."/>
            <person name="Dainese E."/>
            <person name="Jaouen T."/>
            <person name="Gola S."/>
            <person name="Bini E."/>
            <person name="Vicente M."/>
            <person name="Johnsson K."/>
            <person name="Ghisotti D."/>
            <person name="Palu G."/>
            <person name="Hernandez-Pando R."/>
            <person name="Manganelli R."/>
        </authorList>
    </citation>
    <scope>FUNCTION IN TRANSCRIPTION</scope>
    <scope>INDUCTION</scope>
    <scope>DISRUPTION PHENOTYPE</scope>
    <source>
        <strain>ATCC 25618 / H37Rv</strain>
    </source>
</reference>
<accession>P71592</accession>
<accession>F2GPM6</accession>
<accession>L0T257</accession>
<keyword id="KW-0004">4Fe-4S</keyword>
<keyword id="KW-0010">Activator</keyword>
<keyword id="KW-0963">Cytoplasm</keyword>
<keyword id="KW-1015">Disulfide bond</keyword>
<keyword id="KW-0238">DNA-binding</keyword>
<keyword id="KW-0408">Iron</keyword>
<keyword id="KW-0411">Iron-sulfur</keyword>
<keyword id="KW-0479">Metal-binding</keyword>
<keyword id="KW-1185">Reference proteome</keyword>
<keyword id="KW-0804">Transcription</keyword>
<keyword id="KW-0805">Transcription regulation</keyword>
<keyword id="KW-0843">Virulence</keyword>
<dbReference type="EMBL" id="AL123456">
    <property type="protein sequence ID" value="CCP42744.1"/>
    <property type="molecule type" value="Genomic_DNA"/>
</dbReference>
<dbReference type="PIR" id="D70700">
    <property type="entry name" value="D70700"/>
</dbReference>
<dbReference type="RefSeq" id="NP_214536.1">
    <property type="nucleotide sequence ID" value="NC_000962.3"/>
</dbReference>
<dbReference type="RefSeq" id="WP_003400388.1">
    <property type="nucleotide sequence ID" value="NZ_NVQJ01000005.1"/>
</dbReference>
<dbReference type="SMR" id="P71592"/>
<dbReference type="STRING" id="83332.Rv0022c"/>
<dbReference type="PaxDb" id="83332-Rv0022c"/>
<dbReference type="DNASU" id="887071"/>
<dbReference type="GeneID" id="45423982"/>
<dbReference type="GeneID" id="887071"/>
<dbReference type="KEGG" id="mtu:Rv0022c"/>
<dbReference type="KEGG" id="mtv:RVBD_0022c"/>
<dbReference type="TubercuList" id="Rv0022c"/>
<dbReference type="eggNOG" id="ENOG5031JMD">
    <property type="taxonomic scope" value="Bacteria"/>
</dbReference>
<dbReference type="InParanoid" id="P71592"/>
<dbReference type="OrthoDB" id="4750652at2"/>
<dbReference type="Proteomes" id="UP000001584">
    <property type="component" value="Chromosome"/>
</dbReference>
<dbReference type="GO" id="GO:0005737">
    <property type="term" value="C:cytoplasm"/>
    <property type="evidence" value="ECO:0007669"/>
    <property type="project" value="UniProtKB-SubCell"/>
</dbReference>
<dbReference type="GO" id="GO:0009274">
    <property type="term" value="C:peptidoglycan-based cell wall"/>
    <property type="evidence" value="ECO:0007005"/>
    <property type="project" value="MTBBASE"/>
</dbReference>
<dbReference type="GO" id="GO:0051539">
    <property type="term" value="F:4 iron, 4 sulfur cluster binding"/>
    <property type="evidence" value="ECO:0007669"/>
    <property type="project" value="UniProtKB-UniRule"/>
</dbReference>
<dbReference type="GO" id="GO:0035731">
    <property type="term" value="F:dinitrosyl-iron complex binding"/>
    <property type="evidence" value="ECO:0007669"/>
    <property type="project" value="UniProtKB-UniRule"/>
</dbReference>
<dbReference type="GO" id="GO:0003677">
    <property type="term" value="F:DNA binding"/>
    <property type="evidence" value="ECO:0007669"/>
    <property type="project" value="UniProtKB-UniRule"/>
</dbReference>
<dbReference type="GO" id="GO:0046872">
    <property type="term" value="F:metal ion binding"/>
    <property type="evidence" value="ECO:0007669"/>
    <property type="project" value="UniProtKB-KW"/>
</dbReference>
<dbReference type="GO" id="GO:0006355">
    <property type="term" value="P:regulation of DNA-templated transcription"/>
    <property type="evidence" value="ECO:0007669"/>
    <property type="project" value="UniProtKB-UniRule"/>
</dbReference>
<dbReference type="HAMAP" id="MF_01479">
    <property type="entry name" value="WhiB"/>
    <property type="match status" value="1"/>
</dbReference>
<dbReference type="InterPro" id="IPR034768">
    <property type="entry name" value="4FE4S_WBL"/>
</dbReference>
<dbReference type="InterPro" id="IPR003482">
    <property type="entry name" value="Whib"/>
</dbReference>
<dbReference type="Pfam" id="PF02467">
    <property type="entry name" value="Whib"/>
    <property type="match status" value="1"/>
</dbReference>
<dbReference type="PROSITE" id="PS51674">
    <property type="entry name" value="4FE4S_WBL"/>
    <property type="match status" value="1"/>
</dbReference>
<protein>
    <recommendedName>
        <fullName>Transcriptional regulator WhiB5</fullName>
    </recommendedName>
</protein>